<keyword id="KW-0067">ATP-binding</keyword>
<keyword id="KW-1003">Cell membrane</keyword>
<keyword id="KW-0963">Cytoplasm</keyword>
<keyword id="KW-0472">Membrane</keyword>
<keyword id="KW-0547">Nucleotide-binding</keyword>
<keyword id="KW-0653">Protein transport</keyword>
<keyword id="KW-1185">Reference proteome</keyword>
<keyword id="KW-1278">Translocase</keyword>
<keyword id="KW-0811">Translocation</keyword>
<keyword id="KW-0813">Transport</keyword>
<protein>
    <recommendedName>
        <fullName evidence="1">Protein translocase subunit SecA</fullName>
        <ecNumber evidence="1">7.4.2.8</ecNumber>
    </recommendedName>
</protein>
<comment type="function">
    <text evidence="1">Part of the Sec protein translocase complex. Interacts with the SecYEG preprotein conducting channel. Has a central role in coupling the hydrolysis of ATP to the transfer of proteins into and across the cell membrane, serving as an ATP-driven molecular motor driving the stepwise translocation of polypeptide chains across the membrane.</text>
</comment>
<comment type="catalytic activity">
    <reaction evidence="1">
        <text>ATP + H2O + cellular proteinSide 1 = ADP + phosphate + cellular proteinSide 2.</text>
        <dbReference type="EC" id="7.4.2.8"/>
    </reaction>
</comment>
<comment type="subunit">
    <text evidence="1">Monomer and homodimer. Part of the essential Sec protein translocation apparatus which comprises SecA, SecYEG and auxiliary proteins SecDF. Other proteins may also be involved.</text>
</comment>
<comment type="subcellular location">
    <subcellularLocation>
        <location evidence="1">Cell membrane</location>
        <topology evidence="1">Peripheral membrane protein</topology>
        <orientation evidence="1">Cytoplasmic side</orientation>
    </subcellularLocation>
    <subcellularLocation>
        <location evidence="1">Cytoplasm</location>
    </subcellularLocation>
    <text evidence="1">Distribution is 50-50.</text>
</comment>
<comment type="similarity">
    <text evidence="1">Belongs to the SecA family.</text>
</comment>
<proteinExistence type="inferred from homology"/>
<organism>
    <name type="scientific">Mycoplasma pneumoniae (strain ATCC 29342 / M129 / Subtype 1)</name>
    <name type="common">Mycoplasmoides pneumoniae</name>
    <dbReference type="NCBI Taxonomy" id="272634"/>
    <lineage>
        <taxon>Bacteria</taxon>
        <taxon>Bacillati</taxon>
        <taxon>Mycoplasmatota</taxon>
        <taxon>Mycoplasmoidales</taxon>
        <taxon>Mycoplasmoidaceae</taxon>
        <taxon>Mycoplasmoides</taxon>
    </lineage>
</organism>
<dbReference type="EC" id="7.4.2.8" evidence="1"/>
<dbReference type="EMBL" id="U00089">
    <property type="protein sequence ID" value="AAB96269.1"/>
    <property type="molecule type" value="Genomic_DNA"/>
</dbReference>
<dbReference type="PIR" id="S73947">
    <property type="entry name" value="S73947"/>
</dbReference>
<dbReference type="RefSeq" id="NP_109898.1">
    <property type="nucleotide sequence ID" value="NC_000912.1"/>
</dbReference>
<dbReference type="RefSeq" id="WP_010874567.1">
    <property type="nucleotide sequence ID" value="NZ_OU342337.1"/>
</dbReference>
<dbReference type="SMR" id="P75559"/>
<dbReference type="IntAct" id="P75559">
    <property type="interactions" value="3"/>
</dbReference>
<dbReference type="STRING" id="272634.MPN_210"/>
<dbReference type="EnsemblBacteria" id="AAB96269">
    <property type="protein sequence ID" value="AAB96269"/>
    <property type="gene ID" value="MPN_210"/>
</dbReference>
<dbReference type="KEGG" id="mpn:MPN_210"/>
<dbReference type="PATRIC" id="fig|272634.6.peg.229"/>
<dbReference type="HOGENOM" id="CLU_005314_3_0_14"/>
<dbReference type="OrthoDB" id="9805579at2"/>
<dbReference type="BioCyc" id="MPNE272634:G1GJ3-340-MONOMER"/>
<dbReference type="Proteomes" id="UP000000808">
    <property type="component" value="Chromosome"/>
</dbReference>
<dbReference type="GO" id="GO:0031522">
    <property type="term" value="C:cell envelope Sec protein transport complex"/>
    <property type="evidence" value="ECO:0007669"/>
    <property type="project" value="TreeGrafter"/>
</dbReference>
<dbReference type="GO" id="GO:0005829">
    <property type="term" value="C:cytosol"/>
    <property type="evidence" value="ECO:0007669"/>
    <property type="project" value="TreeGrafter"/>
</dbReference>
<dbReference type="GO" id="GO:0005886">
    <property type="term" value="C:plasma membrane"/>
    <property type="evidence" value="ECO:0007669"/>
    <property type="project" value="UniProtKB-SubCell"/>
</dbReference>
<dbReference type="GO" id="GO:0005524">
    <property type="term" value="F:ATP binding"/>
    <property type="evidence" value="ECO:0007669"/>
    <property type="project" value="UniProtKB-UniRule"/>
</dbReference>
<dbReference type="GO" id="GO:0008564">
    <property type="term" value="F:protein-exporting ATPase activity"/>
    <property type="evidence" value="ECO:0007669"/>
    <property type="project" value="UniProtKB-EC"/>
</dbReference>
<dbReference type="GO" id="GO:0065002">
    <property type="term" value="P:intracellular protein transmembrane transport"/>
    <property type="evidence" value="ECO:0007669"/>
    <property type="project" value="UniProtKB-UniRule"/>
</dbReference>
<dbReference type="GO" id="GO:0017038">
    <property type="term" value="P:protein import"/>
    <property type="evidence" value="ECO:0007669"/>
    <property type="project" value="InterPro"/>
</dbReference>
<dbReference type="GO" id="GO:0006605">
    <property type="term" value="P:protein targeting"/>
    <property type="evidence" value="ECO:0007669"/>
    <property type="project" value="UniProtKB-UniRule"/>
</dbReference>
<dbReference type="GO" id="GO:0043952">
    <property type="term" value="P:protein transport by the Sec complex"/>
    <property type="evidence" value="ECO:0007669"/>
    <property type="project" value="TreeGrafter"/>
</dbReference>
<dbReference type="CDD" id="cd17928">
    <property type="entry name" value="DEXDc_SecA"/>
    <property type="match status" value="1"/>
</dbReference>
<dbReference type="CDD" id="cd18803">
    <property type="entry name" value="SF2_C_secA"/>
    <property type="match status" value="1"/>
</dbReference>
<dbReference type="FunFam" id="3.40.50.300:FF:000429">
    <property type="entry name" value="Preprotein translocase subunit SecA"/>
    <property type="match status" value="1"/>
</dbReference>
<dbReference type="Gene3D" id="1.10.3060.10">
    <property type="entry name" value="Helical scaffold and wing domains of SecA"/>
    <property type="match status" value="1"/>
</dbReference>
<dbReference type="Gene3D" id="3.40.50.300">
    <property type="entry name" value="P-loop containing nucleotide triphosphate hydrolases"/>
    <property type="match status" value="3"/>
</dbReference>
<dbReference type="Gene3D" id="3.90.1440.10">
    <property type="entry name" value="SecA, preprotein cross-linking domain"/>
    <property type="match status" value="1"/>
</dbReference>
<dbReference type="HAMAP" id="MF_01382">
    <property type="entry name" value="SecA"/>
    <property type="match status" value="1"/>
</dbReference>
<dbReference type="InterPro" id="IPR014001">
    <property type="entry name" value="Helicase_ATP-bd"/>
</dbReference>
<dbReference type="InterPro" id="IPR001650">
    <property type="entry name" value="Helicase_C-like"/>
</dbReference>
<dbReference type="InterPro" id="IPR027417">
    <property type="entry name" value="P-loop_NTPase"/>
</dbReference>
<dbReference type="InterPro" id="IPR000185">
    <property type="entry name" value="SecA"/>
</dbReference>
<dbReference type="InterPro" id="IPR020937">
    <property type="entry name" value="SecA_CS"/>
</dbReference>
<dbReference type="InterPro" id="IPR011115">
    <property type="entry name" value="SecA_DEAD"/>
</dbReference>
<dbReference type="InterPro" id="IPR014018">
    <property type="entry name" value="SecA_motor_DEAD"/>
</dbReference>
<dbReference type="InterPro" id="IPR011130">
    <property type="entry name" value="SecA_preprotein_X-link_dom"/>
</dbReference>
<dbReference type="InterPro" id="IPR044722">
    <property type="entry name" value="SecA_SF2_C"/>
</dbReference>
<dbReference type="InterPro" id="IPR011116">
    <property type="entry name" value="SecA_Wing/Scaffold"/>
</dbReference>
<dbReference type="InterPro" id="IPR036266">
    <property type="entry name" value="SecA_Wing/Scaffold_sf"/>
</dbReference>
<dbReference type="InterPro" id="IPR036670">
    <property type="entry name" value="SecA_X-link_sf"/>
</dbReference>
<dbReference type="NCBIfam" id="TIGR00963">
    <property type="entry name" value="secA"/>
    <property type="match status" value="1"/>
</dbReference>
<dbReference type="PANTHER" id="PTHR30612:SF0">
    <property type="entry name" value="CHLOROPLAST PROTEIN-TRANSPORTING ATPASE"/>
    <property type="match status" value="1"/>
</dbReference>
<dbReference type="PANTHER" id="PTHR30612">
    <property type="entry name" value="SECA INNER MEMBRANE COMPONENT OF SEC PROTEIN SECRETION SYSTEM"/>
    <property type="match status" value="1"/>
</dbReference>
<dbReference type="Pfam" id="PF21090">
    <property type="entry name" value="P-loop_SecA"/>
    <property type="match status" value="1"/>
</dbReference>
<dbReference type="Pfam" id="PF07517">
    <property type="entry name" value="SecA_DEAD"/>
    <property type="match status" value="1"/>
</dbReference>
<dbReference type="Pfam" id="PF01043">
    <property type="entry name" value="SecA_PP_bind"/>
    <property type="match status" value="1"/>
</dbReference>
<dbReference type="Pfam" id="PF07516">
    <property type="entry name" value="SecA_SW"/>
    <property type="match status" value="1"/>
</dbReference>
<dbReference type="PRINTS" id="PR00906">
    <property type="entry name" value="SECA"/>
</dbReference>
<dbReference type="SMART" id="SM00957">
    <property type="entry name" value="SecA_DEAD"/>
    <property type="match status" value="1"/>
</dbReference>
<dbReference type="SMART" id="SM00958">
    <property type="entry name" value="SecA_PP_bind"/>
    <property type="match status" value="1"/>
</dbReference>
<dbReference type="SUPFAM" id="SSF81886">
    <property type="entry name" value="Helical scaffold and wing domains of SecA"/>
    <property type="match status" value="1"/>
</dbReference>
<dbReference type="SUPFAM" id="SSF52540">
    <property type="entry name" value="P-loop containing nucleoside triphosphate hydrolases"/>
    <property type="match status" value="2"/>
</dbReference>
<dbReference type="SUPFAM" id="SSF81767">
    <property type="entry name" value="Pre-protein crosslinking domain of SecA"/>
    <property type="match status" value="1"/>
</dbReference>
<dbReference type="PROSITE" id="PS01312">
    <property type="entry name" value="SECA"/>
    <property type="match status" value="1"/>
</dbReference>
<dbReference type="PROSITE" id="PS51196">
    <property type="entry name" value="SECA_MOTOR_DEAD"/>
    <property type="match status" value="1"/>
</dbReference>
<evidence type="ECO:0000255" key="1">
    <source>
        <dbReference type="HAMAP-Rule" id="MF_01382"/>
    </source>
</evidence>
<sequence>MGLFNFLKLVSPRHRIYHKASKIANEVEGHKNYYRNLTDVQLLEESNKLVDLVTKQNYTILDVAVAALALIREVVYRETGEFAYRVQIIGAYIVLIGDFAEMMTGEGKTLTIVLAAYVSALEKRGVHVVTVNEYLAQRDATNATKILKRVGMTVGCNFANLAPHLKQAAFACDVTYTTNSELGFDYLRDNMVHRFEDKKIRELHFAIVDEGDSVLIDEARTPLIISGPAKNEFAAYVAVDRFVKKLKEDEYKIDPESRAPALTELGIKHAEKNFKTDNLFALENSDLFHKIINALTAVKVFEQGKEYIVRDGKVLIVDHFTGRILEGRSYSNGLHQAVQAKEMVEIEPENVIVATITYQSFFRLYNRLSAVSGTAFTESEEFLKIYNMVVVPVPTNRPNIRKDRADSVFGTPNIKWLAVVKEVKRIHETGRPILIGTANIDDSELLHNYLQEANIPHEVLNAKNHSREAEIVAKAGQKGAVTISTNMAGRGTDIRLGEGVAEMGGLYVLGTERNESRRIDNQLRGRAGRQGDRGETKFFISLGDALFKRFAHDRIERAITKLGNDTFDSSFFSKMLSRTQKRVEAINFDTRKNLIDYDHVLASQRELIYKQRDKFLLATDLSDMIDKMLEKFVEQFCDQYRNPKNQNLVNHIALSEALNLELNMHGVISPKLFENMTFDATVHKTHSLIGEKITNKVKVLTPPIALIRFREIMITAMDKHWIEHLDNVFKLREGVTLRSMEQTSPLNVYIRETDILFQTMLQKIARDVIIQIANLATPEEFDEELMKANALKKLQALREAHEKSNEGQ</sequence>
<accession>P75559</accession>
<reference key="1">
    <citation type="journal article" date="1996" name="Nucleic Acids Res.">
        <title>Complete sequence analysis of the genome of the bacterium Mycoplasma pneumoniae.</title>
        <authorList>
            <person name="Himmelreich R."/>
            <person name="Hilbert H."/>
            <person name="Plagens H."/>
            <person name="Pirkl E."/>
            <person name="Li B.-C."/>
            <person name="Herrmann R."/>
        </authorList>
    </citation>
    <scope>NUCLEOTIDE SEQUENCE [LARGE SCALE GENOMIC DNA]</scope>
    <source>
        <strain>ATCC 29342 / M129 / Subtype 1</strain>
    </source>
</reference>
<gene>
    <name evidence="1" type="primary">secA</name>
    <name type="ordered locus">MPN_210</name>
    <name type="ORF">MP621</name>
</gene>
<name>SECA_MYCPN</name>
<feature type="chain" id="PRO_0000109596" description="Protein translocase subunit SecA">
    <location>
        <begin position="1"/>
        <end position="808"/>
    </location>
</feature>
<feature type="binding site" evidence="1">
    <location>
        <position position="87"/>
    </location>
    <ligand>
        <name>ATP</name>
        <dbReference type="ChEBI" id="CHEBI:30616"/>
    </ligand>
</feature>
<feature type="binding site" evidence="1">
    <location>
        <begin position="105"/>
        <end position="109"/>
    </location>
    <ligand>
        <name>ATP</name>
        <dbReference type="ChEBI" id="CHEBI:30616"/>
    </ligand>
</feature>
<feature type="binding site" evidence="1">
    <location>
        <position position="493"/>
    </location>
    <ligand>
        <name>ATP</name>
        <dbReference type="ChEBI" id="CHEBI:30616"/>
    </ligand>
</feature>